<evidence type="ECO:0000255" key="1">
    <source>
        <dbReference type="HAMAP-Rule" id="MF_00156"/>
    </source>
</evidence>
<accession>A2S561</accession>
<reference key="1">
    <citation type="journal article" date="2010" name="Genome Biol. Evol.">
        <title>Continuing evolution of Burkholderia mallei through genome reduction and large-scale rearrangements.</title>
        <authorList>
            <person name="Losada L."/>
            <person name="Ronning C.M."/>
            <person name="DeShazer D."/>
            <person name="Woods D."/>
            <person name="Fedorova N."/>
            <person name="Kim H.S."/>
            <person name="Shabalina S.A."/>
            <person name="Pearson T.R."/>
            <person name="Brinkac L."/>
            <person name="Tan P."/>
            <person name="Nandi T."/>
            <person name="Crabtree J."/>
            <person name="Badger J."/>
            <person name="Beckstrom-Sternberg S."/>
            <person name="Saqib M."/>
            <person name="Schutzer S.E."/>
            <person name="Keim P."/>
            <person name="Nierman W.C."/>
        </authorList>
    </citation>
    <scope>NUCLEOTIDE SEQUENCE [LARGE SCALE GENOMIC DNA]</scope>
    <source>
        <strain>NCTC 10229</strain>
    </source>
</reference>
<gene>
    <name evidence="1" type="primary">panB</name>
    <name type="ordered locus">BMA10229_A1095</name>
</gene>
<sequence>MTYLQESSRPAVTVPKLQAMREAGEKIAMLTSYDASFAALLDRANVDVQLIGDSLGNVLQGQATTLPVTLDDIAYHTACVARAQPRGLVVADLPFGTYGTPADAFASAVKLMRAGAQMVKLEGGEWLAETVRFLVERAVPVCAHVGLTPQSVHAFGGFKVQGKTEAGAAQLLRDARAVEEAGAQLIVLEAVPTLVAAEVTRELSIPTIGIGAGAECSGQVLVLHDMLGVFPGKRPRFVKDFMQGQPSIFAAVEAYVRAVKDGSFPGPEHSF</sequence>
<name>PANB_BURM9</name>
<organism>
    <name type="scientific">Burkholderia mallei (strain NCTC 10229)</name>
    <dbReference type="NCBI Taxonomy" id="412022"/>
    <lineage>
        <taxon>Bacteria</taxon>
        <taxon>Pseudomonadati</taxon>
        <taxon>Pseudomonadota</taxon>
        <taxon>Betaproteobacteria</taxon>
        <taxon>Burkholderiales</taxon>
        <taxon>Burkholderiaceae</taxon>
        <taxon>Burkholderia</taxon>
        <taxon>pseudomallei group</taxon>
    </lineage>
</organism>
<comment type="function">
    <text evidence="1">Catalyzes the reversible reaction in which hydroxymethyl group from 5,10-methylenetetrahydrofolate is transferred onto alpha-ketoisovalerate to form ketopantoate.</text>
</comment>
<comment type="catalytic activity">
    <reaction evidence="1">
        <text>3-methyl-2-oxobutanoate + (6R)-5,10-methylene-5,6,7,8-tetrahydrofolate + H2O = 2-dehydropantoate + (6S)-5,6,7,8-tetrahydrofolate</text>
        <dbReference type="Rhea" id="RHEA:11824"/>
        <dbReference type="ChEBI" id="CHEBI:11561"/>
        <dbReference type="ChEBI" id="CHEBI:11851"/>
        <dbReference type="ChEBI" id="CHEBI:15377"/>
        <dbReference type="ChEBI" id="CHEBI:15636"/>
        <dbReference type="ChEBI" id="CHEBI:57453"/>
        <dbReference type="EC" id="2.1.2.11"/>
    </reaction>
</comment>
<comment type="cofactor">
    <cofactor evidence="1">
        <name>Mg(2+)</name>
        <dbReference type="ChEBI" id="CHEBI:18420"/>
    </cofactor>
    <text evidence="1">Binds 1 Mg(2+) ion per subunit.</text>
</comment>
<comment type="pathway">
    <text evidence="1">Cofactor biosynthesis; (R)-pantothenate biosynthesis; (R)-pantoate from 3-methyl-2-oxobutanoate: step 1/2.</text>
</comment>
<comment type="subunit">
    <text evidence="1">Homodecamer; pentamer of dimers.</text>
</comment>
<comment type="subcellular location">
    <subcellularLocation>
        <location evidence="1">Cytoplasm</location>
    </subcellularLocation>
</comment>
<comment type="similarity">
    <text evidence="1">Belongs to the PanB family.</text>
</comment>
<dbReference type="EC" id="2.1.2.11" evidence="1"/>
<dbReference type="EMBL" id="CP000546">
    <property type="protein sequence ID" value="ABN02269.1"/>
    <property type="molecule type" value="Genomic_DNA"/>
</dbReference>
<dbReference type="RefSeq" id="WP_004194137.1">
    <property type="nucleotide sequence ID" value="NC_008836.1"/>
</dbReference>
<dbReference type="SMR" id="A2S561"/>
<dbReference type="GeneID" id="93061412"/>
<dbReference type="KEGG" id="bml:BMA10229_A1095"/>
<dbReference type="HOGENOM" id="CLU_036645_1_0_4"/>
<dbReference type="UniPathway" id="UPA00028">
    <property type="reaction ID" value="UER00003"/>
</dbReference>
<dbReference type="Proteomes" id="UP000002283">
    <property type="component" value="Chromosome I"/>
</dbReference>
<dbReference type="GO" id="GO:0005737">
    <property type="term" value="C:cytoplasm"/>
    <property type="evidence" value="ECO:0007669"/>
    <property type="project" value="UniProtKB-SubCell"/>
</dbReference>
<dbReference type="GO" id="GO:0003864">
    <property type="term" value="F:3-methyl-2-oxobutanoate hydroxymethyltransferase activity"/>
    <property type="evidence" value="ECO:0007669"/>
    <property type="project" value="UniProtKB-UniRule"/>
</dbReference>
<dbReference type="GO" id="GO:0000287">
    <property type="term" value="F:magnesium ion binding"/>
    <property type="evidence" value="ECO:0007669"/>
    <property type="project" value="TreeGrafter"/>
</dbReference>
<dbReference type="GO" id="GO:0015940">
    <property type="term" value="P:pantothenate biosynthetic process"/>
    <property type="evidence" value="ECO:0007669"/>
    <property type="project" value="UniProtKB-UniRule"/>
</dbReference>
<dbReference type="CDD" id="cd06557">
    <property type="entry name" value="KPHMT-like"/>
    <property type="match status" value="1"/>
</dbReference>
<dbReference type="FunFam" id="3.20.20.60:FF:000003">
    <property type="entry name" value="3-methyl-2-oxobutanoate hydroxymethyltransferase"/>
    <property type="match status" value="1"/>
</dbReference>
<dbReference type="Gene3D" id="3.20.20.60">
    <property type="entry name" value="Phosphoenolpyruvate-binding domains"/>
    <property type="match status" value="1"/>
</dbReference>
<dbReference type="HAMAP" id="MF_00156">
    <property type="entry name" value="PanB"/>
    <property type="match status" value="1"/>
</dbReference>
<dbReference type="InterPro" id="IPR003700">
    <property type="entry name" value="Pantoate_hydroxy_MeTrfase"/>
</dbReference>
<dbReference type="InterPro" id="IPR015813">
    <property type="entry name" value="Pyrv/PenolPyrv_kinase-like_dom"/>
</dbReference>
<dbReference type="InterPro" id="IPR040442">
    <property type="entry name" value="Pyrv_kinase-like_dom_sf"/>
</dbReference>
<dbReference type="NCBIfam" id="TIGR00222">
    <property type="entry name" value="panB"/>
    <property type="match status" value="1"/>
</dbReference>
<dbReference type="NCBIfam" id="NF001452">
    <property type="entry name" value="PRK00311.1"/>
    <property type="match status" value="1"/>
</dbReference>
<dbReference type="PANTHER" id="PTHR20881">
    <property type="entry name" value="3-METHYL-2-OXOBUTANOATE HYDROXYMETHYLTRANSFERASE"/>
    <property type="match status" value="1"/>
</dbReference>
<dbReference type="PANTHER" id="PTHR20881:SF0">
    <property type="entry name" value="3-METHYL-2-OXOBUTANOATE HYDROXYMETHYLTRANSFERASE"/>
    <property type="match status" value="1"/>
</dbReference>
<dbReference type="Pfam" id="PF02548">
    <property type="entry name" value="Pantoate_transf"/>
    <property type="match status" value="1"/>
</dbReference>
<dbReference type="PIRSF" id="PIRSF000388">
    <property type="entry name" value="Pantoate_hydroxy_MeTrfase"/>
    <property type="match status" value="1"/>
</dbReference>
<dbReference type="SUPFAM" id="SSF51621">
    <property type="entry name" value="Phosphoenolpyruvate/pyruvate domain"/>
    <property type="match status" value="1"/>
</dbReference>
<keyword id="KW-0963">Cytoplasm</keyword>
<keyword id="KW-0460">Magnesium</keyword>
<keyword id="KW-0479">Metal-binding</keyword>
<keyword id="KW-0566">Pantothenate biosynthesis</keyword>
<keyword id="KW-0808">Transferase</keyword>
<feature type="chain" id="PRO_1000011364" description="3-methyl-2-oxobutanoate hydroxymethyltransferase">
    <location>
        <begin position="1"/>
        <end position="271"/>
    </location>
</feature>
<feature type="active site" description="Proton acceptor" evidence="1">
    <location>
        <position position="189"/>
    </location>
</feature>
<feature type="binding site" evidence="1">
    <location>
        <begin position="53"/>
        <end position="54"/>
    </location>
    <ligand>
        <name>3-methyl-2-oxobutanoate</name>
        <dbReference type="ChEBI" id="CHEBI:11851"/>
    </ligand>
</feature>
<feature type="binding site" evidence="1">
    <location>
        <position position="53"/>
    </location>
    <ligand>
        <name>Mg(2+)</name>
        <dbReference type="ChEBI" id="CHEBI:18420"/>
    </ligand>
</feature>
<feature type="binding site" evidence="1">
    <location>
        <position position="92"/>
    </location>
    <ligand>
        <name>3-methyl-2-oxobutanoate</name>
        <dbReference type="ChEBI" id="CHEBI:11851"/>
    </ligand>
</feature>
<feature type="binding site" evidence="1">
    <location>
        <position position="92"/>
    </location>
    <ligand>
        <name>Mg(2+)</name>
        <dbReference type="ChEBI" id="CHEBI:18420"/>
    </ligand>
</feature>
<feature type="binding site" evidence="1">
    <location>
        <position position="120"/>
    </location>
    <ligand>
        <name>3-methyl-2-oxobutanoate</name>
        <dbReference type="ChEBI" id="CHEBI:11851"/>
    </ligand>
</feature>
<feature type="binding site" evidence="1">
    <location>
        <position position="122"/>
    </location>
    <ligand>
        <name>Mg(2+)</name>
        <dbReference type="ChEBI" id="CHEBI:18420"/>
    </ligand>
</feature>
<protein>
    <recommendedName>
        <fullName evidence="1">3-methyl-2-oxobutanoate hydroxymethyltransferase</fullName>
        <ecNumber evidence="1">2.1.2.11</ecNumber>
    </recommendedName>
    <alternativeName>
        <fullName evidence="1">Ketopantoate hydroxymethyltransferase</fullName>
        <shortName evidence="1">KPHMT</shortName>
    </alternativeName>
</protein>
<proteinExistence type="inferred from homology"/>